<keyword id="KW-0489">Methyltransferase</keyword>
<keyword id="KW-0808">Transferase</keyword>
<proteinExistence type="evidence at protein level"/>
<sequence length="289" mass="32259">MAVVERDSDYYDSSYLADYYESLWTDHAALEDIAVYWAFFKERVLLSQSRVDSKFFLLDVGTGTGRVLHSLIDKAVNDADMSLDAMQFVGMDKSPFMLEQAQRAKQLPQEVRASWFVGTATALEDIASLADPHGKANLLIFAFSGINHLHQPGEIDQFFLSARRVLLPGGLALVSVCAPLLDIEGGDSVPNPYGQVKEVKSKRLEGILYREWETGQKIEGHLFTNSLKTDVVQVSQDGSERVIERNIHNIPLTLLTRDGLRRSAAAAKLEIIEERCIRDEVIFALRAVG</sequence>
<comment type="function">
    <text evidence="1">N-methyltransferase; part of the gene cluster that mediates the biosynthesis of the alkaloid (-)-FR901483, a potent immunosuppressant that shows efficacy in animal models and a probable inhibitor of purine nucleotide biosynthesis by targeting phosphoribosylpyrophosphate amidotransferase (PPAT) (PubMed:33372776). Within the pathway, FrzE methylates the amine at position C10' (PubMed:33372776). The biosynthesis of (-)-FR901483 starts with the condensation of two L-tyrosines to yield (S,S)-dityrosyl-piperazine. This process occurs in 3 steps with the non-canonical nonribosomal peptide synthetase FrzA catalyzing the reduction of L-tyrosine into L-tyrosinal, the spontaneous condensation of 2 L-tyrosinal units, and the subsequent reduction by the NmrA-like family domain-containing oxidoreductase FrzB. The cytochrome P450 monooxygenase FrzC then performs coupling between N10 and C1' to morph the piperazine into a 1,4-diazabicyclo[3.2.1]octane spiro-fused to a 2,5-cyclohexadienone. The dienone portion is further reduced to cyclohexanone by the flavin-dependent reductase FrzD. The methyltranserases (MTs) FrzE and FrzF are then involved in the methylation at the C10' amine and the C4 phenolic oxygen, respectively. The order of the two MTs appear to be interchangeable. Cleavage of the C9-N10' bond by the dioxygenase FrzG then leads to formation of a conjugated iminium. In addition to the oxidation of C9, an additional dehydrogenation between C7 and C8 can occur to give a likely shunt product. The next biosynthetic step is the intramolecular aldol condensation catalyzed by the newly identified aldolase FrzH to yield an aza-tricyclic product with the formation of a C9-C3' bond (PubMed:33372776). The short-chain dehydrogenase/reductase FrzI then produces dephospho-(-)-FR901483 that is phosphorylated at C4'-OH into (-)-FR901483 by the phosphotransferase FrzJ (PubMed:33372776).</text>
</comment>
<comment type="catalytic activity">
    <reaction evidence="1">
        <text>(1S,4S)-4-[(4-hydroxyphenyl)methyl]-2,5-diazaspiro[bicyclo[3.2.1]octane-6,1'-cyclohexan]-4'-one + S-adenosyl-L-methionine = (1S,4S)-4-[(4-hydroxyphenyl)methyl]-2-methyl-2,5-diazaspiro[bicyclo[3.2.1]octane-6,1'-cyclohexan]-4'-one + S-adenosyl-L-homocysteine + H(+)</text>
        <dbReference type="Rhea" id="RHEA:83587"/>
        <dbReference type="ChEBI" id="CHEBI:15378"/>
        <dbReference type="ChEBI" id="CHEBI:57856"/>
        <dbReference type="ChEBI" id="CHEBI:59789"/>
        <dbReference type="ChEBI" id="CHEBI:233175"/>
        <dbReference type="ChEBI" id="CHEBI:233176"/>
    </reaction>
    <physiologicalReaction direction="left-to-right" evidence="1">
        <dbReference type="Rhea" id="RHEA:83588"/>
    </physiologicalReaction>
</comment>
<comment type="catalytic activity">
    <reaction evidence="1">
        <text>(1S,4S)-4-[(4-methoxyphenyl)methyl]-2,5-diazaspiro[bicyclo[3.2.1]octane-6,1'-cyclohexan]-4'-one + S-adenosyl-L-methionine = (1S,4S)-4-[(4-methoxyphenyl)methyl]-2-methyl-2,5-diazaspiro[bicyclo[3.2.1]octane-6,1'-cyclohexan]-4'-one + S-adenosyl-L-homocysteine + H(+)</text>
        <dbReference type="Rhea" id="RHEA:83599"/>
        <dbReference type="ChEBI" id="CHEBI:15378"/>
        <dbReference type="ChEBI" id="CHEBI:57856"/>
        <dbReference type="ChEBI" id="CHEBI:59789"/>
        <dbReference type="ChEBI" id="CHEBI:233177"/>
        <dbReference type="ChEBI" id="CHEBI:233178"/>
    </reaction>
    <physiologicalReaction direction="left-to-right" evidence="1">
        <dbReference type="Rhea" id="RHEA:83600"/>
    </physiologicalReaction>
</comment>
<comment type="pathway">
    <text evidence="1">Secondary metabolite biosynthesis.</text>
</comment>
<comment type="similarity">
    <text evidence="3">Belongs to the methyltransferase superfamily.</text>
</comment>
<reference key="1">
    <citation type="journal article" date="2021" name="J. Am. Chem. Soc.">
        <title>Biosynthesis of the Immunosuppressant (-)-FR901483.</title>
        <authorList>
            <person name="Zhang Z."/>
            <person name="Tamura Y."/>
            <person name="Tang M."/>
            <person name="Qiao T."/>
            <person name="Sato M."/>
            <person name="Otsu Y."/>
            <person name="Sasamura S."/>
            <person name="Taniguchi M."/>
            <person name="Watanabe K."/>
            <person name="Tang Y."/>
        </authorList>
    </citation>
    <scope>NUCLEOTIDE SEQUENCE [GENOMIC DNA]</scope>
    <scope>FUNCTION</scope>
    <scope>CATALYTIC ACTIVITY</scope>
    <scope>PATHWAY</scope>
    <source>
        <strain>11231</strain>
    </source>
</reference>
<protein>
    <recommendedName>
        <fullName evidence="2">N-methyltransferase FrzE</fullName>
        <ecNumber evidence="1">2.1.1.-</ecNumber>
    </recommendedName>
    <alternativeName>
        <fullName evidence="2">FR901483 biosynthesis cluster protein E</fullName>
    </alternativeName>
</protein>
<feature type="chain" id="PRO_0000462333" description="N-methyltransferase FrzE">
    <location>
        <begin position="1"/>
        <end position="289"/>
    </location>
</feature>
<organism>
    <name type="scientific">Cladobotryum sp</name>
    <dbReference type="NCBI Taxonomy" id="2040732"/>
    <lineage>
        <taxon>Eukaryota</taxon>
        <taxon>Fungi</taxon>
        <taxon>Dikarya</taxon>
        <taxon>Ascomycota</taxon>
        <taxon>Pezizomycotina</taxon>
        <taxon>Sordariomycetes</taxon>
        <taxon>Hypocreomycetidae</taxon>
        <taxon>Hypocreales</taxon>
        <taxon>Hypocreaceae</taxon>
        <taxon>Cladobotryum</taxon>
    </lineage>
</organism>
<evidence type="ECO:0000269" key="1">
    <source>
    </source>
</evidence>
<evidence type="ECO:0000303" key="2">
    <source>
    </source>
</evidence>
<evidence type="ECO:0000305" key="3"/>
<accession>A0A7T8F1L3</accession>
<name>FRZE_CLASX</name>
<dbReference type="EC" id="2.1.1.-" evidence="1"/>
<dbReference type="EMBL" id="MW322046">
    <property type="protein sequence ID" value="QQO98477.1"/>
    <property type="molecule type" value="Genomic_DNA"/>
</dbReference>
<dbReference type="CDD" id="cd02440">
    <property type="entry name" value="AdoMet_MTases"/>
    <property type="match status" value="1"/>
</dbReference>
<dbReference type="Gene3D" id="3.40.50.150">
    <property type="entry name" value="Vaccinia Virus protein VP39"/>
    <property type="match status" value="1"/>
</dbReference>
<dbReference type="InterPro" id="IPR041698">
    <property type="entry name" value="Methyltransf_25"/>
</dbReference>
<dbReference type="InterPro" id="IPR029063">
    <property type="entry name" value="SAM-dependent_MTases_sf"/>
</dbReference>
<dbReference type="Pfam" id="PF13649">
    <property type="entry name" value="Methyltransf_25"/>
    <property type="match status" value="1"/>
</dbReference>
<dbReference type="SUPFAM" id="SSF53335">
    <property type="entry name" value="S-adenosyl-L-methionine-dependent methyltransferases"/>
    <property type="match status" value="1"/>
</dbReference>
<gene>
    <name evidence="2" type="primary">FrzE</name>
</gene>